<feature type="propeptide" id="PRO_0000271137" description="Removed in mature form" evidence="1">
    <location>
        <begin position="1"/>
        <end position="6"/>
    </location>
</feature>
<feature type="chain" id="PRO_0000271138" description="ATP synthase subunit a">
    <location>
        <begin position="7"/>
        <end position="254"/>
    </location>
</feature>
<feature type="transmembrane region" description="Helical" evidence="2">
    <location>
        <begin position="32"/>
        <end position="52"/>
    </location>
</feature>
<feature type="transmembrane region" description="Helical" evidence="2">
    <location>
        <begin position="83"/>
        <end position="103"/>
    </location>
</feature>
<feature type="transmembrane region" description="Helical" evidence="2">
    <location>
        <begin position="119"/>
        <end position="139"/>
    </location>
</feature>
<feature type="transmembrane region" description="Helical" evidence="2">
    <location>
        <begin position="146"/>
        <end position="166"/>
    </location>
</feature>
<feature type="transmembrane region" description="Helical" evidence="2">
    <location>
        <begin position="182"/>
        <end position="202"/>
    </location>
</feature>
<feature type="transmembrane region" description="Helical" evidence="2">
    <location>
        <begin position="207"/>
        <end position="227"/>
    </location>
</feature>
<feature type="transmembrane region" description="Helical" evidence="2">
    <location>
        <begin position="228"/>
        <end position="248"/>
    </location>
</feature>
<comment type="function">
    <text>Mitochondrial membrane ATP synthase (F(1)F(0) ATP synthase or Complex V) produces ATP from ADP in the presence of a proton gradient across the membrane which is generated by electron transport complexes of the respiratory chain. F-type ATPases consist of two structural domains, F(1) - containing the extramembraneous catalytic core and F(0) - containing the membrane proton channel, linked together by a central stalk and a peripheral stalk. During catalysis, ATP synthesis in the catalytic domain of F(1) is coupled via a rotary mechanism of the central stalk subunits to proton translocation. Key component of the proton channel; it may play a direct role in the translocation of protons across the membrane.</text>
</comment>
<comment type="subunit">
    <text evidence="1">F-type ATPases have 2 components, CF(1) - the catalytic core - and CF(0) - the membrane proton channel. CF(1) has five subunits: alpha(3), beta(3), gamma(1), delta(1), epsilon(1). CF(0) has three main subunits: a, b and c (By similarity).</text>
</comment>
<comment type="subcellular location">
    <subcellularLocation>
        <location>Mitochondrion inner membrane</location>
        <topology>Multi-pass membrane protein</topology>
    </subcellularLocation>
</comment>
<comment type="similarity">
    <text evidence="3">Belongs to the ATPase A chain family.</text>
</comment>
<organism>
    <name type="scientific">Mycosarcoma maydis</name>
    <name type="common">Corn smut fungus</name>
    <name type="synonym">Ustilago maydis</name>
    <dbReference type="NCBI Taxonomy" id="5270"/>
    <lineage>
        <taxon>Eukaryota</taxon>
        <taxon>Fungi</taxon>
        <taxon>Dikarya</taxon>
        <taxon>Basidiomycota</taxon>
        <taxon>Ustilaginomycotina</taxon>
        <taxon>Ustilaginomycetes</taxon>
        <taxon>Ustilaginales</taxon>
        <taxon>Ustilaginaceae</taxon>
        <taxon>Mycosarcoma</taxon>
    </lineage>
</organism>
<geneLocation type="mitochondrion"/>
<gene>
    <name type="primary">ATP6</name>
</gene>
<accession>Q0H8Y6</accession>
<protein>
    <recommendedName>
        <fullName>ATP synthase subunit a</fullName>
    </recommendedName>
    <alternativeName>
        <fullName>F-ATPase protein 6</fullName>
    </alternativeName>
</protein>
<sequence length="254" mass="27742">MAFLIHSPLEQFEVTSLISLNLPVLGYINLSLTNLGLYTILTVYLVLALHIMGSNNKQLIPSRWSIALESSFASVHGLVKSQIGAANEMYLPFIYSLFFFILIANLSGNVPYGFTVATSIMVSIGLSMTIFIGVTILGLRLHKVHFFSFFVPSGTPLGLVPLLVPIELISYLARAFSLGVRLFANVTAGHVLMKILAGFLAPLFTSTFIISVLTVLPFIIFTGIIGLEIAVSFIQAYVFCVLTCSYLKDAIDLH</sequence>
<keyword id="KW-0066">ATP synthesis</keyword>
<keyword id="KW-0138">CF(0)</keyword>
<keyword id="KW-0375">Hydrogen ion transport</keyword>
<keyword id="KW-0406">Ion transport</keyword>
<keyword id="KW-0472">Membrane</keyword>
<keyword id="KW-0496">Mitochondrion</keyword>
<keyword id="KW-0999">Mitochondrion inner membrane</keyword>
<keyword id="KW-1185">Reference proteome</keyword>
<keyword id="KW-0812">Transmembrane</keyword>
<keyword id="KW-1133">Transmembrane helix</keyword>
<keyword id="KW-0813">Transport</keyword>
<evidence type="ECO:0000250" key="1"/>
<evidence type="ECO:0000255" key="2"/>
<evidence type="ECO:0000305" key="3"/>
<reference key="1">
    <citation type="submission" date="2005-08" db="EMBL/GenBank/DDBJ databases">
        <title>Annotation of mitochondrial genome of Ustilago maydis and comparative analysis of basidiomycete mtDNAs.</title>
        <authorList>
            <person name="Kennell J.C."/>
            <person name="Boehmer C."/>
        </authorList>
    </citation>
    <scope>NUCLEOTIDE SEQUENCE [LARGE SCALE GENOMIC DNA]</scope>
    <source>
        <strain>DSM 14603 / FGSC 9021 / UM521</strain>
    </source>
</reference>
<reference key="2">
    <citation type="journal article" date="2006" name="Nature">
        <title>Insights from the genome of the biotrophic fungal plant pathogen Ustilago maydis.</title>
        <authorList>
            <person name="Kaemper J."/>
            <person name="Kahmann R."/>
            <person name="Boelker M."/>
            <person name="Ma L.-J."/>
            <person name="Brefort T."/>
            <person name="Saville B.J."/>
            <person name="Banuett F."/>
            <person name="Kronstad J.W."/>
            <person name="Gold S.E."/>
            <person name="Mueller O."/>
            <person name="Perlin M.H."/>
            <person name="Woesten H.A.B."/>
            <person name="de Vries R."/>
            <person name="Ruiz-Herrera J."/>
            <person name="Reynaga-Pena C.G."/>
            <person name="Snetselaar K."/>
            <person name="McCann M."/>
            <person name="Perez-Martin J."/>
            <person name="Feldbruegge M."/>
            <person name="Basse C.W."/>
            <person name="Steinberg G."/>
            <person name="Ibeas J.I."/>
            <person name="Holloman W."/>
            <person name="Guzman P."/>
            <person name="Farman M.L."/>
            <person name="Stajich J.E."/>
            <person name="Sentandreu R."/>
            <person name="Gonzalez-Prieto J.M."/>
            <person name="Kennell J.C."/>
            <person name="Molina L."/>
            <person name="Schirawski J."/>
            <person name="Mendoza-Mendoza A."/>
            <person name="Greilinger D."/>
            <person name="Muench K."/>
            <person name="Roessel N."/>
            <person name="Scherer M."/>
            <person name="Vranes M."/>
            <person name="Ladendorf O."/>
            <person name="Vincon V."/>
            <person name="Fuchs U."/>
            <person name="Sandrock B."/>
            <person name="Meng S."/>
            <person name="Ho E.C.H."/>
            <person name="Cahill M.J."/>
            <person name="Boyce K.J."/>
            <person name="Klose J."/>
            <person name="Klosterman S.J."/>
            <person name="Deelstra H.J."/>
            <person name="Ortiz-Castellanos L."/>
            <person name="Li W."/>
            <person name="Sanchez-Alonso P."/>
            <person name="Schreier P.H."/>
            <person name="Haeuser-Hahn I."/>
            <person name="Vaupel M."/>
            <person name="Koopmann E."/>
            <person name="Friedrich G."/>
            <person name="Voss H."/>
            <person name="Schlueter T."/>
            <person name="Margolis J."/>
            <person name="Platt D."/>
            <person name="Swimmer C."/>
            <person name="Gnirke A."/>
            <person name="Chen F."/>
            <person name="Vysotskaia V."/>
            <person name="Mannhaupt G."/>
            <person name="Gueldener U."/>
            <person name="Muensterkoetter M."/>
            <person name="Haase D."/>
            <person name="Oesterheld M."/>
            <person name="Mewes H.-W."/>
            <person name="Mauceli E.W."/>
            <person name="DeCaprio D."/>
            <person name="Wade C.M."/>
            <person name="Butler J."/>
            <person name="Young S.K."/>
            <person name="Jaffe D.B."/>
            <person name="Calvo S.E."/>
            <person name="Nusbaum C."/>
            <person name="Galagan J.E."/>
            <person name="Birren B.W."/>
        </authorList>
    </citation>
    <scope>NUCLEOTIDE SEQUENCE [LARGE SCALE GENOMIC DNA]</scope>
    <source>
        <strain>DSM 14603 / FGSC 9021 / UM521</strain>
    </source>
</reference>
<name>ATP6_MYCMD</name>
<dbReference type="EMBL" id="DQ157700">
    <property type="protein sequence ID" value="AAZ67009.1"/>
    <property type="molecule type" value="Genomic_DNA"/>
</dbReference>
<dbReference type="EMBL" id="AACP01000278">
    <property type="status" value="NOT_ANNOTATED_CDS"/>
    <property type="molecule type" value="Genomic_DNA"/>
</dbReference>
<dbReference type="RefSeq" id="YP_762686.1">
    <property type="nucleotide sequence ID" value="NC_008368.1"/>
</dbReference>
<dbReference type="SMR" id="Q0H8Y6"/>
<dbReference type="FunCoup" id="Q0H8Y6">
    <property type="interactions" value="69"/>
</dbReference>
<dbReference type="STRING" id="237631.Q0H8Y6"/>
<dbReference type="GeneID" id="4308290"/>
<dbReference type="InParanoid" id="Q0H8Y6"/>
<dbReference type="Proteomes" id="UP000000561">
    <property type="component" value="Mitochondrion"/>
</dbReference>
<dbReference type="GO" id="GO:0005743">
    <property type="term" value="C:mitochondrial inner membrane"/>
    <property type="evidence" value="ECO:0007669"/>
    <property type="project" value="UniProtKB-SubCell"/>
</dbReference>
<dbReference type="GO" id="GO:0045259">
    <property type="term" value="C:proton-transporting ATP synthase complex"/>
    <property type="evidence" value="ECO:0000318"/>
    <property type="project" value="GO_Central"/>
</dbReference>
<dbReference type="GO" id="GO:0015078">
    <property type="term" value="F:proton transmembrane transporter activity"/>
    <property type="evidence" value="ECO:0007669"/>
    <property type="project" value="InterPro"/>
</dbReference>
<dbReference type="GO" id="GO:0015986">
    <property type="term" value="P:proton motive force-driven ATP synthesis"/>
    <property type="evidence" value="ECO:0000318"/>
    <property type="project" value="GO_Central"/>
</dbReference>
<dbReference type="CDD" id="cd00310">
    <property type="entry name" value="ATP-synt_Fo_a_6"/>
    <property type="match status" value="1"/>
</dbReference>
<dbReference type="FunFam" id="1.20.120.220:FF:000003">
    <property type="entry name" value="ATP synthase subunit a"/>
    <property type="match status" value="1"/>
</dbReference>
<dbReference type="Gene3D" id="1.20.120.220">
    <property type="entry name" value="ATP synthase, F0 complex, subunit A"/>
    <property type="match status" value="1"/>
</dbReference>
<dbReference type="HAMAP" id="MF_01393">
    <property type="entry name" value="ATP_synth_a_bact"/>
    <property type="match status" value="1"/>
</dbReference>
<dbReference type="InterPro" id="IPR000568">
    <property type="entry name" value="ATP_synth_F0_asu"/>
</dbReference>
<dbReference type="InterPro" id="IPR023011">
    <property type="entry name" value="ATP_synth_F0_asu_AS"/>
</dbReference>
<dbReference type="InterPro" id="IPR045083">
    <property type="entry name" value="ATP_synth_F0_asu_bact/mt"/>
</dbReference>
<dbReference type="InterPro" id="IPR035908">
    <property type="entry name" value="F0_ATP_A_sf"/>
</dbReference>
<dbReference type="NCBIfam" id="TIGR01131">
    <property type="entry name" value="ATP_synt_6_or_A"/>
    <property type="match status" value="1"/>
</dbReference>
<dbReference type="NCBIfam" id="NF004482">
    <property type="entry name" value="PRK05815.2-4"/>
    <property type="match status" value="1"/>
</dbReference>
<dbReference type="PANTHER" id="PTHR11410">
    <property type="entry name" value="ATP SYNTHASE SUBUNIT A"/>
    <property type="match status" value="1"/>
</dbReference>
<dbReference type="PANTHER" id="PTHR11410:SF0">
    <property type="entry name" value="ATP SYNTHASE SUBUNIT A"/>
    <property type="match status" value="1"/>
</dbReference>
<dbReference type="Pfam" id="PF00119">
    <property type="entry name" value="ATP-synt_A"/>
    <property type="match status" value="1"/>
</dbReference>
<dbReference type="PRINTS" id="PR00123">
    <property type="entry name" value="ATPASEA"/>
</dbReference>
<dbReference type="SUPFAM" id="SSF81336">
    <property type="entry name" value="F1F0 ATP synthase subunit A"/>
    <property type="match status" value="1"/>
</dbReference>
<dbReference type="PROSITE" id="PS00449">
    <property type="entry name" value="ATPASE_A"/>
    <property type="match status" value="1"/>
</dbReference>
<proteinExistence type="inferred from homology"/>